<feature type="chain" id="PRO_0000158022" description="Protein-glutamate methylesterase/protein-glutamine glutaminase of group 2 operon">
    <location>
        <begin position="1"/>
        <end position="391"/>
    </location>
</feature>
<feature type="domain" description="Response regulatory" evidence="1">
    <location>
        <begin position="20"/>
        <end position="138"/>
    </location>
</feature>
<feature type="domain" description="CheB-type methylesterase" evidence="1">
    <location>
        <begin position="196"/>
        <end position="383"/>
    </location>
</feature>
<feature type="active site" evidence="1">
    <location>
        <position position="207"/>
    </location>
</feature>
<feature type="active site" evidence="1">
    <location>
        <position position="235"/>
    </location>
</feature>
<feature type="active site" evidence="1">
    <location>
        <position position="331"/>
    </location>
</feature>
<feature type="modified residue" description="4-aspartylphosphate" evidence="1">
    <location>
        <position position="71"/>
    </location>
</feature>
<organism>
    <name type="scientific">Rhodopseudomonas palustris (strain ATCC BAA-98 / CGA009)</name>
    <dbReference type="NCBI Taxonomy" id="258594"/>
    <lineage>
        <taxon>Bacteria</taxon>
        <taxon>Pseudomonadati</taxon>
        <taxon>Pseudomonadota</taxon>
        <taxon>Alphaproteobacteria</taxon>
        <taxon>Hyphomicrobiales</taxon>
        <taxon>Nitrobacteraceae</taxon>
        <taxon>Rhodopseudomonas</taxon>
    </lineage>
</organism>
<dbReference type="EC" id="3.1.1.61" evidence="1"/>
<dbReference type="EC" id="3.5.1.44" evidence="1"/>
<dbReference type="EMBL" id="BX572598">
    <property type="protein sequence ID" value="CAE27071.1"/>
    <property type="molecule type" value="Genomic_DNA"/>
</dbReference>
<dbReference type="RefSeq" id="WP_011157189.1">
    <property type="nucleotide sequence ID" value="NZ_CP116810.1"/>
</dbReference>
<dbReference type="SMR" id="P62644"/>
<dbReference type="STRING" id="258594.RPA1630"/>
<dbReference type="GeneID" id="66892662"/>
<dbReference type="eggNOG" id="COG2201">
    <property type="taxonomic scope" value="Bacteria"/>
</dbReference>
<dbReference type="HOGENOM" id="CLU_000445_51_0_5"/>
<dbReference type="PhylomeDB" id="P62644"/>
<dbReference type="GO" id="GO:0005737">
    <property type="term" value="C:cytoplasm"/>
    <property type="evidence" value="ECO:0007669"/>
    <property type="project" value="UniProtKB-SubCell"/>
</dbReference>
<dbReference type="GO" id="GO:0000156">
    <property type="term" value="F:phosphorelay response regulator activity"/>
    <property type="evidence" value="ECO:0007669"/>
    <property type="project" value="InterPro"/>
</dbReference>
<dbReference type="GO" id="GO:0008984">
    <property type="term" value="F:protein-glutamate methylesterase activity"/>
    <property type="evidence" value="ECO:0007669"/>
    <property type="project" value="UniProtKB-UniRule"/>
</dbReference>
<dbReference type="GO" id="GO:0050568">
    <property type="term" value="F:protein-glutamine glutaminase activity"/>
    <property type="evidence" value="ECO:0007669"/>
    <property type="project" value="UniProtKB-UniRule"/>
</dbReference>
<dbReference type="GO" id="GO:0006935">
    <property type="term" value="P:chemotaxis"/>
    <property type="evidence" value="ECO:0007669"/>
    <property type="project" value="UniProtKB-UniRule"/>
</dbReference>
<dbReference type="CDD" id="cd16432">
    <property type="entry name" value="CheB_Rec"/>
    <property type="match status" value="1"/>
</dbReference>
<dbReference type="CDD" id="cd17541">
    <property type="entry name" value="REC_CheB-like"/>
    <property type="match status" value="1"/>
</dbReference>
<dbReference type="Gene3D" id="3.40.50.2300">
    <property type="match status" value="1"/>
</dbReference>
<dbReference type="Gene3D" id="3.40.50.180">
    <property type="entry name" value="Methylesterase CheB, C-terminal domain"/>
    <property type="match status" value="1"/>
</dbReference>
<dbReference type="HAMAP" id="MF_00099">
    <property type="entry name" value="CheB_chemtxs"/>
    <property type="match status" value="1"/>
</dbReference>
<dbReference type="InterPro" id="IPR008248">
    <property type="entry name" value="CheB-like"/>
</dbReference>
<dbReference type="InterPro" id="IPR035909">
    <property type="entry name" value="CheB_C"/>
</dbReference>
<dbReference type="InterPro" id="IPR011006">
    <property type="entry name" value="CheY-like_superfamily"/>
</dbReference>
<dbReference type="InterPro" id="IPR000673">
    <property type="entry name" value="Sig_transdc_resp-reg_Me-estase"/>
</dbReference>
<dbReference type="InterPro" id="IPR001789">
    <property type="entry name" value="Sig_transdc_resp-reg_receiver"/>
</dbReference>
<dbReference type="NCBIfam" id="NF001965">
    <property type="entry name" value="PRK00742.1"/>
    <property type="match status" value="1"/>
</dbReference>
<dbReference type="PANTHER" id="PTHR42872">
    <property type="entry name" value="PROTEIN-GLUTAMATE METHYLESTERASE/PROTEIN-GLUTAMINE GLUTAMINASE"/>
    <property type="match status" value="1"/>
</dbReference>
<dbReference type="PANTHER" id="PTHR42872:SF3">
    <property type="entry name" value="PROTEIN-GLUTAMATE METHYLESTERASE_PROTEIN-GLUTAMINE GLUTAMINASE 1"/>
    <property type="match status" value="1"/>
</dbReference>
<dbReference type="Pfam" id="PF01339">
    <property type="entry name" value="CheB_methylest"/>
    <property type="match status" value="1"/>
</dbReference>
<dbReference type="Pfam" id="PF00072">
    <property type="entry name" value="Response_reg"/>
    <property type="match status" value="1"/>
</dbReference>
<dbReference type="PIRSF" id="PIRSF000876">
    <property type="entry name" value="RR_chemtxs_CheB"/>
    <property type="match status" value="1"/>
</dbReference>
<dbReference type="SMART" id="SM00448">
    <property type="entry name" value="REC"/>
    <property type="match status" value="1"/>
</dbReference>
<dbReference type="SUPFAM" id="SSF52172">
    <property type="entry name" value="CheY-like"/>
    <property type="match status" value="1"/>
</dbReference>
<dbReference type="SUPFAM" id="SSF52738">
    <property type="entry name" value="Methylesterase CheB, C-terminal domain"/>
    <property type="match status" value="1"/>
</dbReference>
<dbReference type="PROSITE" id="PS50122">
    <property type="entry name" value="CHEB"/>
    <property type="match status" value="1"/>
</dbReference>
<dbReference type="PROSITE" id="PS50110">
    <property type="entry name" value="RESPONSE_REGULATORY"/>
    <property type="match status" value="1"/>
</dbReference>
<sequence>MSVALAGSPATNSAQYEPLRVMIVDDSVVIRGLISRWVEAEPDMVVAASLRTGLDAVNQLERVKPDVAVLDIEMPELDGISALPQLLAKKRDLVVIMASTLTRRNAEISFKALSLGAADYIPKPETTREPQAADIFKHDLLQKIRSLGGRVRRRAVPGVAAPAIAREPHPAPLPHPAVATPTVASQAALVKRSFGPTAPRVLLIGSSTGGPQALMSMVADIGPVIDRFPVLITQHMPPTFTTILAEHLARASRRPAHEGIEGEAIKPGNIYLAPGGKHMRVAKQGGNPVIALDDGPPVNFCKPAVDPLFMSAIEVWQGGILAVVLTGMGSDGMRGGKDIVAAGGSVIAQDEASSVVWGMPGAVANAGVCAAVLPLNQIGPKVVRLFAGDRS</sequence>
<protein>
    <recommendedName>
        <fullName>Protein-glutamate methylesterase/protein-glutamine glutaminase of group 2 operon</fullName>
        <ecNumber evidence="1">3.1.1.61</ecNumber>
        <ecNumber evidence="1">3.5.1.44</ecNumber>
    </recommendedName>
</protein>
<accession>P62644</accession>
<accession>Q6N9B9</accession>
<proteinExistence type="inferred from homology"/>
<name>CHEB2_RHOPA</name>
<comment type="function">
    <text evidence="1">Involved in chemotaxis. Part of a chemotaxis signal transduction system that modulates chemotaxis in response to various stimuli. Catalyzes the demethylation of specific methylglutamate residues introduced into the chemoreceptors (methyl-accepting chemotaxis proteins or MCP) by CheR. Also mediates the irreversible deamidation of specific glutamine residues to glutamic acid.</text>
</comment>
<comment type="catalytic activity">
    <reaction evidence="1">
        <text>[protein]-L-glutamate 5-O-methyl ester + H2O = L-glutamyl-[protein] + methanol + H(+)</text>
        <dbReference type="Rhea" id="RHEA:23236"/>
        <dbReference type="Rhea" id="RHEA-COMP:10208"/>
        <dbReference type="Rhea" id="RHEA-COMP:10311"/>
        <dbReference type="ChEBI" id="CHEBI:15377"/>
        <dbReference type="ChEBI" id="CHEBI:15378"/>
        <dbReference type="ChEBI" id="CHEBI:17790"/>
        <dbReference type="ChEBI" id="CHEBI:29973"/>
        <dbReference type="ChEBI" id="CHEBI:82795"/>
        <dbReference type="EC" id="3.1.1.61"/>
    </reaction>
</comment>
<comment type="catalytic activity">
    <reaction evidence="1">
        <text>L-glutaminyl-[protein] + H2O = L-glutamyl-[protein] + NH4(+)</text>
        <dbReference type="Rhea" id="RHEA:16441"/>
        <dbReference type="Rhea" id="RHEA-COMP:10207"/>
        <dbReference type="Rhea" id="RHEA-COMP:10208"/>
        <dbReference type="ChEBI" id="CHEBI:15377"/>
        <dbReference type="ChEBI" id="CHEBI:28938"/>
        <dbReference type="ChEBI" id="CHEBI:29973"/>
        <dbReference type="ChEBI" id="CHEBI:30011"/>
        <dbReference type="EC" id="3.5.1.44"/>
    </reaction>
</comment>
<comment type="subcellular location">
    <subcellularLocation>
        <location evidence="1">Cytoplasm</location>
    </subcellularLocation>
</comment>
<comment type="domain">
    <text evidence="1">Contains a C-terminal catalytic domain, and an N-terminal region which modulates catalytic activity.</text>
</comment>
<comment type="PTM">
    <text evidence="1">Phosphorylated by CheA. Phosphorylation of the N-terminal regulatory domain activates the methylesterase activity.</text>
</comment>
<comment type="miscellaneous">
    <text>R.palustris does not have a group 1 operon.</text>
</comment>
<comment type="similarity">
    <text evidence="1">Belongs to the CheB family.</text>
</comment>
<reference key="1">
    <citation type="journal article" date="2004" name="Nat. Biotechnol.">
        <title>Complete genome sequence of the metabolically versatile photosynthetic bacterium Rhodopseudomonas palustris.</title>
        <authorList>
            <person name="Larimer F.W."/>
            <person name="Chain P."/>
            <person name="Hauser L."/>
            <person name="Lamerdin J.E."/>
            <person name="Malfatti S."/>
            <person name="Do L."/>
            <person name="Land M.L."/>
            <person name="Pelletier D.A."/>
            <person name="Beatty J.T."/>
            <person name="Lang A.S."/>
            <person name="Tabita F.R."/>
            <person name="Gibson J.L."/>
            <person name="Hanson T.E."/>
            <person name="Bobst C."/>
            <person name="Torres y Torres J.L."/>
            <person name="Peres C."/>
            <person name="Harrison F.H."/>
            <person name="Gibson J."/>
            <person name="Harwood C.S."/>
        </authorList>
    </citation>
    <scope>NUCLEOTIDE SEQUENCE [LARGE SCALE GENOMIC DNA]</scope>
    <source>
        <strain>ATCC BAA-98 / CGA009</strain>
    </source>
</reference>
<gene>
    <name evidence="1" type="primary">cheB2</name>
    <name type="ordered locus">RPA1630</name>
</gene>
<evidence type="ECO:0000255" key="1">
    <source>
        <dbReference type="HAMAP-Rule" id="MF_00099"/>
    </source>
</evidence>
<keyword id="KW-0145">Chemotaxis</keyword>
<keyword id="KW-0963">Cytoplasm</keyword>
<keyword id="KW-0378">Hydrolase</keyword>
<keyword id="KW-0597">Phosphoprotein</keyword>